<keyword id="KW-0963">Cytoplasm</keyword>
<keyword id="KW-0441">Lipid A biosynthesis</keyword>
<keyword id="KW-0444">Lipid biosynthesis</keyword>
<keyword id="KW-0443">Lipid metabolism</keyword>
<keyword id="KW-0456">Lyase</keyword>
<keyword id="KW-1185">Reference proteome</keyword>
<comment type="function">
    <text evidence="1">Involved in unsaturated fatty acids biosynthesis. Catalyzes the dehydration of short chain beta-hydroxyacyl-ACPs and long chain saturated and unsaturated beta-hydroxyacyl-ACPs.</text>
</comment>
<comment type="catalytic activity">
    <reaction evidence="1">
        <text>a (3R)-hydroxyacyl-[ACP] = a (2E)-enoyl-[ACP] + H2O</text>
        <dbReference type="Rhea" id="RHEA:13097"/>
        <dbReference type="Rhea" id="RHEA-COMP:9925"/>
        <dbReference type="Rhea" id="RHEA-COMP:9945"/>
        <dbReference type="ChEBI" id="CHEBI:15377"/>
        <dbReference type="ChEBI" id="CHEBI:78784"/>
        <dbReference type="ChEBI" id="CHEBI:78827"/>
        <dbReference type="EC" id="4.2.1.59"/>
    </reaction>
</comment>
<comment type="subcellular location">
    <subcellularLocation>
        <location evidence="1">Cytoplasm</location>
    </subcellularLocation>
</comment>
<comment type="similarity">
    <text evidence="1">Belongs to the thioester dehydratase family. FabZ subfamily.</text>
</comment>
<feature type="chain" id="PRO_1000134692" description="3-hydroxyacyl-[acyl-carrier-protein] dehydratase FabZ">
    <location>
        <begin position="1"/>
        <end position="146"/>
    </location>
</feature>
<feature type="active site" evidence="1">
    <location>
        <position position="48"/>
    </location>
</feature>
<accession>B9KDS7</accession>
<name>FABZ_CAMLR</name>
<reference key="1">
    <citation type="journal article" date="2008" name="Foodborne Pathog. Dis.">
        <title>The complete genome sequence and analysis of the human pathogen Campylobacter lari.</title>
        <authorList>
            <person name="Miller W.G."/>
            <person name="Wang G."/>
            <person name="Binnewies T.T."/>
            <person name="Parker C.T."/>
        </authorList>
    </citation>
    <scope>NUCLEOTIDE SEQUENCE [LARGE SCALE GENOMIC DNA]</scope>
    <source>
        <strain>RM2100 / D67 / ATCC BAA-1060</strain>
    </source>
</reference>
<proteinExistence type="inferred from homology"/>
<sequence>MIDVMQIQKILPHRYPFLLVDKIVELKTKQIVKGYKNISISDHVFMGHFPDHPIYPGVLILEGMAQTGGVLAFESMDDKVDPSSKVVYFTGIDNAKFRNPVRPGDRLDYEMSVVKNRGNLWIFEGKAFVDGQLVAEAELKAMIVDK</sequence>
<gene>
    <name evidence="1" type="primary">fabZ</name>
    <name type="ordered locus">Cla_1400</name>
</gene>
<evidence type="ECO:0000255" key="1">
    <source>
        <dbReference type="HAMAP-Rule" id="MF_00406"/>
    </source>
</evidence>
<organism>
    <name type="scientific">Campylobacter lari (strain RM2100 / D67 / ATCC BAA-1060)</name>
    <dbReference type="NCBI Taxonomy" id="306263"/>
    <lineage>
        <taxon>Bacteria</taxon>
        <taxon>Pseudomonadati</taxon>
        <taxon>Campylobacterota</taxon>
        <taxon>Epsilonproteobacteria</taxon>
        <taxon>Campylobacterales</taxon>
        <taxon>Campylobacteraceae</taxon>
        <taxon>Campylobacter</taxon>
    </lineage>
</organism>
<dbReference type="EC" id="4.2.1.59" evidence="1"/>
<dbReference type="EMBL" id="CP000932">
    <property type="protein sequence ID" value="ACM64715.1"/>
    <property type="molecule type" value="Genomic_DNA"/>
</dbReference>
<dbReference type="RefSeq" id="WP_012662098.1">
    <property type="nucleotide sequence ID" value="NC_012039.1"/>
</dbReference>
<dbReference type="RefSeq" id="WP_012662099.1">
    <property type="nucleotide sequence ID" value="NC_012039.1"/>
</dbReference>
<dbReference type="SMR" id="B9KDS7"/>
<dbReference type="STRING" id="306263.Cla_1400"/>
<dbReference type="KEGG" id="cla:CLA_1400"/>
<dbReference type="PATRIC" id="fig|306263.5.peg.1386"/>
<dbReference type="eggNOG" id="COG0764">
    <property type="taxonomic scope" value="Bacteria"/>
</dbReference>
<dbReference type="HOGENOM" id="CLU_078912_1_2_7"/>
<dbReference type="Proteomes" id="UP000007727">
    <property type="component" value="Chromosome"/>
</dbReference>
<dbReference type="GO" id="GO:0005737">
    <property type="term" value="C:cytoplasm"/>
    <property type="evidence" value="ECO:0007669"/>
    <property type="project" value="UniProtKB-SubCell"/>
</dbReference>
<dbReference type="GO" id="GO:0016020">
    <property type="term" value="C:membrane"/>
    <property type="evidence" value="ECO:0007669"/>
    <property type="project" value="GOC"/>
</dbReference>
<dbReference type="GO" id="GO:0019171">
    <property type="term" value="F:(3R)-hydroxyacyl-[acyl-carrier-protein] dehydratase activity"/>
    <property type="evidence" value="ECO:0007669"/>
    <property type="project" value="UniProtKB-EC"/>
</dbReference>
<dbReference type="GO" id="GO:0006633">
    <property type="term" value="P:fatty acid biosynthetic process"/>
    <property type="evidence" value="ECO:0007669"/>
    <property type="project" value="UniProtKB-UniRule"/>
</dbReference>
<dbReference type="GO" id="GO:0009245">
    <property type="term" value="P:lipid A biosynthetic process"/>
    <property type="evidence" value="ECO:0007669"/>
    <property type="project" value="UniProtKB-UniRule"/>
</dbReference>
<dbReference type="CDD" id="cd01288">
    <property type="entry name" value="FabZ"/>
    <property type="match status" value="1"/>
</dbReference>
<dbReference type="FunFam" id="3.10.129.10:FF:000001">
    <property type="entry name" value="3-hydroxyacyl-[acyl-carrier-protein] dehydratase FabZ"/>
    <property type="match status" value="1"/>
</dbReference>
<dbReference type="Gene3D" id="3.10.129.10">
    <property type="entry name" value="Hotdog Thioesterase"/>
    <property type="match status" value="1"/>
</dbReference>
<dbReference type="HAMAP" id="MF_00406">
    <property type="entry name" value="FabZ"/>
    <property type="match status" value="1"/>
</dbReference>
<dbReference type="InterPro" id="IPR013114">
    <property type="entry name" value="FabA_FabZ"/>
</dbReference>
<dbReference type="InterPro" id="IPR010084">
    <property type="entry name" value="FabZ"/>
</dbReference>
<dbReference type="InterPro" id="IPR029069">
    <property type="entry name" value="HotDog_dom_sf"/>
</dbReference>
<dbReference type="NCBIfam" id="TIGR01750">
    <property type="entry name" value="fabZ"/>
    <property type="match status" value="1"/>
</dbReference>
<dbReference type="NCBIfam" id="NF000582">
    <property type="entry name" value="PRK00006.1"/>
    <property type="match status" value="1"/>
</dbReference>
<dbReference type="PANTHER" id="PTHR30272">
    <property type="entry name" value="3-HYDROXYACYL-[ACYL-CARRIER-PROTEIN] DEHYDRATASE"/>
    <property type="match status" value="1"/>
</dbReference>
<dbReference type="PANTHER" id="PTHR30272:SF1">
    <property type="entry name" value="3-HYDROXYACYL-[ACYL-CARRIER-PROTEIN] DEHYDRATASE"/>
    <property type="match status" value="1"/>
</dbReference>
<dbReference type="Pfam" id="PF07977">
    <property type="entry name" value="FabA"/>
    <property type="match status" value="1"/>
</dbReference>
<dbReference type="SUPFAM" id="SSF54637">
    <property type="entry name" value="Thioesterase/thiol ester dehydrase-isomerase"/>
    <property type="match status" value="1"/>
</dbReference>
<protein>
    <recommendedName>
        <fullName evidence="1">3-hydroxyacyl-[acyl-carrier-protein] dehydratase FabZ</fullName>
        <ecNumber evidence="1">4.2.1.59</ecNumber>
    </recommendedName>
    <alternativeName>
        <fullName evidence="1">(3R)-hydroxymyristoyl-[acyl-carrier-protein] dehydratase</fullName>
        <shortName evidence="1">(3R)-hydroxymyristoyl-ACP dehydrase</shortName>
    </alternativeName>
    <alternativeName>
        <fullName evidence="1">Beta-hydroxyacyl-ACP dehydratase</fullName>
    </alternativeName>
</protein>